<comment type="function">
    <text evidence="1">Involved in the partitioning of the mitochondrial organelle and mitochondrial DNA (mtDNA) inheritance.</text>
</comment>
<comment type="subcellular location">
    <subcellularLocation>
        <location evidence="1">Mitochondrion</location>
    </subcellularLocation>
</comment>
<comment type="similarity">
    <text evidence="3">Belongs to the misato family.</text>
</comment>
<feature type="chain" id="PRO_0000285341" description="Protein dml1">
    <location>
        <begin position="1"/>
        <end position="465"/>
    </location>
</feature>
<feature type="modified residue" description="Phosphoserine" evidence="2">
    <location>
        <position position="446"/>
    </location>
</feature>
<sequence>MHEILTVTFGRKSNFCWTHFWNTQESYFVYDPNDHAKVNVNTNFRVLKKRDPEAIVTVPRECIYDTPIEFGNTRKNWLEELNESSGGKGTAWDGKLTQIMQTPVDVHPYQEALWSRDEIHEGNAIESEYELPSIRPKSVKYWSDFNRLFLDTEYLFPVNCSELNSSDFSFQLGVERFHDFDKQFNVWDEGLRPLVEECDSVQGFQAAIDIDTPWGGFASEYMKVVQDELGECRVPTWVYGIREPIQSDSSATIDNHFGKLNEALSLSQLNGSCSQYFPLCTISQGDDLWASSAKINLAIESFTLPTRVYGSSCYRMKDIESKLQSEGRGFIHNLNFKAKNYSSKEWALVSSASFVNVAQDYSQQNNCLFGVVRSPKDNQGLLEGKNYNASSISKIVNIQNLGLPSLETVPEGLRTLDTVFVEATNDGQINSHIQGLTKSLNRRFVSFVDQDELEEIREILSSYII</sequence>
<evidence type="ECO:0000250" key="1"/>
<evidence type="ECO:0000269" key="2">
    <source>
    </source>
</evidence>
<evidence type="ECO:0000305" key="3"/>
<organism>
    <name type="scientific">Schizosaccharomyces pombe (strain 972 / ATCC 24843)</name>
    <name type="common">Fission yeast</name>
    <dbReference type="NCBI Taxonomy" id="284812"/>
    <lineage>
        <taxon>Eukaryota</taxon>
        <taxon>Fungi</taxon>
        <taxon>Dikarya</taxon>
        <taxon>Ascomycota</taxon>
        <taxon>Taphrinomycotina</taxon>
        <taxon>Schizosaccharomycetes</taxon>
        <taxon>Schizosaccharomycetales</taxon>
        <taxon>Schizosaccharomycetaceae</taxon>
        <taxon>Schizosaccharomyces</taxon>
    </lineage>
</organism>
<keyword id="KW-0496">Mitochondrion</keyword>
<keyword id="KW-0597">Phosphoprotein</keyword>
<keyword id="KW-1185">Reference proteome</keyword>
<proteinExistence type="evidence at protein level"/>
<accession>Q9P6K5</accession>
<gene>
    <name type="primary">dml1</name>
    <name type="ORF">SPAC30C2.06c</name>
</gene>
<dbReference type="EMBL" id="CU329670">
    <property type="protein sequence ID" value="CAB90793.1"/>
    <property type="molecule type" value="Genomic_DNA"/>
</dbReference>
<dbReference type="RefSeq" id="NP_594658.1">
    <property type="nucleotide sequence ID" value="NM_001020087.2"/>
</dbReference>
<dbReference type="BioGRID" id="279045">
    <property type="interactions" value="2"/>
</dbReference>
<dbReference type="FunCoup" id="Q9P6K5">
    <property type="interactions" value="281"/>
</dbReference>
<dbReference type="STRING" id="284812.Q9P6K5"/>
<dbReference type="iPTMnet" id="Q9P6K5"/>
<dbReference type="PaxDb" id="4896-SPAC30C2.06c.1"/>
<dbReference type="EnsemblFungi" id="SPAC30C2.06c.1">
    <property type="protein sequence ID" value="SPAC30C2.06c.1:pep"/>
    <property type="gene ID" value="SPAC30C2.06c"/>
</dbReference>
<dbReference type="GeneID" id="2542590"/>
<dbReference type="KEGG" id="spo:2542590"/>
<dbReference type="PomBase" id="SPAC30C2.06c">
    <property type="gene designation" value="dml1"/>
</dbReference>
<dbReference type="VEuPathDB" id="FungiDB:SPAC30C2.06c"/>
<dbReference type="eggNOG" id="KOG2530">
    <property type="taxonomic scope" value="Eukaryota"/>
</dbReference>
<dbReference type="HOGENOM" id="CLU_633288_0_0_1"/>
<dbReference type="InParanoid" id="Q9P6K5"/>
<dbReference type="OMA" id="QMYANES"/>
<dbReference type="PhylomeDB" id="Q9P6K5"/>
<dbReference type="PRO" id="PR:Q9P6K5"/>
<dbReference type="Proteomes" id="UP000002485">
    <property type="component" value="Chromosome I"/>
</dbReference>
<dbReference type="GO" id="GO:0005737">
    <property type="term" value="C:cytoplasm"/>
    <property type="evidence" value="ECO:0000318"/>
    <property type="project" value="GO_Central"/>
</dbReference>
<dbReference type="GO" id="GO:0005829">
    <property type="term" value="C:cytosol"/>
    <property type="evidence" value="ECO:0007005"/>
    <property type="project" value="PomBase"/>
</dbReference>
<dbReference type="GO" id="GO:0005739">
    <property type="term" value="C:mitochondrion"/>
    <property type="evidence" value="ECO:0000318"/>
    <property type="project" value="GO_Central"/>
</dbReference>
<dbReference type="GO" id="GO:0003924">
    <property type="term" value="F:GTPase activity"/>
    <property type="evidence" value="ECO:0000255"/>
    <property type="project" value="PomBase"/>
</dbReference>
<dbReference type="GO" id="GO:0008053">
    <property type="term" value="P:mitochondrial fusion"/>
    <property type="evidence" value="ECO:0000250"/>
    <property type="project" value="PomBase"/>
</dbReference>
<dbReference type="GO" id="GO:0007005">
    <property type="term" value="P:mitochondrion organization"/>
    <property type="evidence" value="ECO:0000318"/>
    <property type="project" value="GO_Central"/>
</dbReference>
<dbReference type="Gene3D" id="3.40.50.1440">
    <property type="entry name" value="Tubulin/FtsZ, GTPase domain"/>
    <property type="match status" value="1"/>
</dbReference>
<dbReference type="InterPro" id="IPR049942">
    <property type="entry name" value="DML1/Misato"/>
</dbReference>
<dbReference type="InterPro" id="IPR029209">
    <property type="entry name" value="DML1/Misato_tubulin"/>
</dbReference>
<dbReference type="InterPro" id="IPR019605">
    <property type="entry name" value="Misato_II_tubulin-like"/>
</dbReference>
<dbReference type="InterPro" id="IPR036525">
    <property type="entry name" value="Tubulin/FtsZ_GTPase_sf"/>
</dbReference>
<dbReference type="PANTHER" id="PTHR13391">
    <property type="entry name" value="MITOCHONDRIAL DISTRIBUTION REGULATOR MISATO"/>
    <property type="match status" value="1"/>
</dbReference>
<dbReference type="PANTHER" id="PTHR13391:SF0">
    <property type="entry name" value="PROTEIN MISATO HOMOLOG 1"/>
    <property type="match status" value="1"/>
</dbReference>
<dbReference type="Pfam" id="PF10644">
    <property type="entry name" value="Misat_Tub_SegII"/>
    <property type="match status" value="1"/>
</dbReference>
<dbReference type="Pfam" id="PF14881">
    <property type="entry name" value="Tubulin_3"/>
    <property type="match status" value="1"/>
</dbReference>
<dbReference type="SUPFAM" id="SSF52490">
    <property type="entry name" value="Tubulin nucleotide-binding domain-like"/>
    <property type="match status" value="1"/>
</dbReference>
<name>DML1_SCHPO</name>
<protein>
    <recommendedName>
        <fullName>Protein dml1</fullName>
    </recommendedName>
</protein>
<reference key="1">
    <citation type="journal article" date="2002" name="Nature">
        <title>The genome sequence of Schizosaccharomyces pombe.</title>
        <authorList>
            <person name="Wood V."/>
            <person name="Gwilliam R."/>
            <person name="Rajandream M.A."/>
            <person name="Lyne M.H."/>
            <person name="Lyne R."/>
            <person name="Stewart A."/>
            <person name="Sgouros J.G."/>
            <person name="Peat N."/>
            <person name="Hayles J."/>
            <person name="Baker S.G."/>
            <person name="Basham D."/>
            <person name="Bowman S."/>
            <person name="Brooks K."/>
            <person name="Brown D."/>
            <person name="Brown S."/>
            <person name="Chillingworth T."/>
            <person name="Churcher C.M."/>
            <person name="Collins M."/>
            <person name="Connor R."/>
            <person name="Cronin A."/>
            <person name="Davis P."/>
            <person name="Feltwell T."/>
            <person name="Fraser A."/>
            <person name="Gentles S."/>
            <person name="Goble A."/>
            <person name="Hamlin N."/>
            <person name="Harris D.E."/>
            <person name="Hidalgo J."/>
            <person name="Hodgson G."/>
            <person name="Holroyd S."/>
            <person name="Hornsby T."/>
            <person name="Howarth S."/>
            <person name="Huckle E.J."/>
            <person name="Hunt S."/>
            <person name="Jagels K."/>
            <person name="James K.D."/>
            <person name="Jones L."/>
            <person name="Jones M."/>
            <person name="Leather S."/>
            <person name="McDonald S."/>
            <person name="McLean J."/>
            <person name="Mooney P."/>
            <person name="Moule S."/>
            <person name="Mungall K.L."/>
            <person name="Murphy L.D."/>
            <person name="Niblett D."/>
            <person name="Odell C."/>
            <person name="Oliver K."/>
            <person name="O'Neil S."/>
            <person name="Pearson D."/>
            <person name="Quail M.A."/>
            <person name="Rabbinowitsch E."/>
            <person name="Rutherford K.M."/>
            <person name="Rutter S."/>
            <person name="Saunders D."/>
            <person name="Seeger K."/>
            <person name="Sharp S."/>
            <person name="Skelton J."/>
            <person name="Simmonds M.N."/>
            <person name="Squares R."/>
            <person name="Squares S."/>
            <person name="Stevens K."/>
            <person name="Taylor K."/>
            <person name="Taylor R.G."/>
            <person name="Tivey A."/>
            <person name="Walsh S.V."/>
            <person name="Warren T."/>
            <person name="Whitehead S."/>
            <person name="Woodward J.R."/>
            <person name="Volckaert G."/>
            <person name="Aert R."/>
            <person name="Robben J."/>
            <person name="Grymonprez B."/>
            <person name="Weltjens I."/>
            <person name="Vanstreels E."/>
            <person name="Rieger M."/>
            <person name="Schaefer M."/>
            <person name="Mueller-Auer S."/>
            <person name="Gabel C."/>
            <person name="Fuchs M."/>
            <person name="Duesterhoeft A."/>
            <person name="Fritzc C."/>
            <person name="Holzer E."/>
            <person name="Moestl D."/>
            <person name="Hilbert H."/>
            <person name="Borzym K."/>
            <person name="Langer I."/>
            <person name="Beck A."/>
            <person name="Lehrach H."/>
            <person name="Reinhardt R."/>
            <person name="Pohl T.M."/>
            <person name="Eger P."/>
            <person name="Zimmermann W."/>
            <person name="Wedler H."/>
            <person name="Wambutt R."/>
            <person name="Purnelle B."/>
            <person name="Goffeau A."/>
            <person name="Cadieu E."/>
            <person name="Dreano S."/>
            <person name="Gloux S."/>
            <person name="Lelaure V."/>
            <person name="Mottier S."/>
            <person name="Galibert F."/>
            <person name="Aves S.J."/>
            <person name="Xiang Z."/>
            <person name="Hunt C."/>
            <person name="Moore K."/>
            <person name="Hurst S.M."/>
            <person name="Lucas M."/>
            <person name="Rochet M."/>
            <person name="Gaillardin C."/>
            <person name="Tallada V.A."/>
            <person name="Garzon A."/>
            <person name="Thode G."/>
            <person name="Daga R.R."/>
            <person name="Cruzado L."/>
            <person name="Jimenez J."/>
            <person name="Sanchez M."/>
            <person name="del Rey F."/>
            <person name="Benito J."/>
            <person name="Dominguez A."/>
            <person name="Revuelta J.L."/>
            <person name="Moreno S."/>
            <person name="Armstrong J."/>
            <person name="Forsburg S.L."/>
            <person name="Cerutti L."/>
            <person name="Lowe T."/>
            <person name="McCombie W.R."/>
            <person name="Paulsen I."/>
            <person name="Potashkin J."/>
            <person name="Shpakovski G.V."/>
            <person name="Ussery D."/>
            <person name="Barrell B.G."/>
            <person name="Nurse P."/>
        </authorList>
    </citation>
    <scope>NUCLEOTIDE SEQUENCE [LARGE SCALE GENOMIC DNA]</scope>
    <source>
        <strain>972 / ATCC 24843</strain>
    </source>
</reference>
<reference key="2">
    <citation type="journal article" date="2008" name="J. Proteome Res.">
        <title>Phosphoproteome analysis of fission yeast.</title>
        <authorList>
            <person name="Wilson-Grady J.T."/>
            <person name="Villen J."/>
            <person name="Gygi S.P."/>
        </authorList>
    </citation>
    <scope>PHOSPHORYLATION [LARGE SCALE ANALYSIS] AT SER-446</scope>
    <scope>IDENTIFICATION BY MASS SPECTROMETRY</scope>
</reference>